<accession>A4SCU2</accession>
<reference key="1">
    <citation type="submission" date="2007-03" db="EMBL/GenBank/DDBJ databases">
        <title>Complete sequence of Prosthecochloris vibrioformis DSM 265.</title>
        <authorList>
            <consortium name="US DOE Joint Genome Institute"/>
            <person name="Copeland A."/>
            <person name="Lucas S."/>
            <person name="Lapidus A."/>
            <person name="Barry K."/>
            <person name="Detter J.C."/>
            <person name="Glavina del Rio T."/>
            <person name="Hammon N."/>
            <person name="Israni S."/>
            <person name="Pitluck S."/>
            <person name="Schmutz J."/>
            <person name="Larimer F."/>
            <person name="Land M."/>
            <person name="Hauser L."/>
            <person name="Mikhailova N."/>
            <person name="Li T."/>
            <person name="Overmann J."/>
            <person name="Schuster S.C."/>
            <person name="Bryant D.A."/>
            <person name="Richardson P."/>
        </authorList>
    </citation>
    <scope>NUCLEOTIDE SEQUENCE [LARGE SCALE GENOMIC DNA]</scope>
    <source>
        <strain>DSM 265 / 1930</strain>
    </source>
</reference>
<sequence>MESKPFSLPSQSATVLIGTQFGDEGKGKLVDYLSDQYDIVVRYQGGANAGHTICFDGKSVVLHLIPSGIFNEKCVCVIGNGVVIDPVALLEEIATVEALGYEVKGRLFISHNAHLIMPYHKRLDSLSESAQGDQKIGTTGRGIGPSYEDKFARKGIRVVDLLNAEVLQEKLRENLAQKNRLFTTIYDGEEIDVESMVREYEEFDKIIDPYITNTQLYLNRQLREGRTVLLEGAQGSLLDVDHGTYPFVTSSNPTSGGACTGSGIAPNHIGKVIGVCKAYMTRVGNGAFPTELFDETGEELGRVGHEFGATTGRKRRCGWIDLVAMRYAVAVNGITELALTKLDVLDGFEEIQVCNSYTLDGKEIFDFPTDHETLSRVKPVLTPMKGWMASNADARNFEEMRPAAKQFVEFLENELEVPVTFISVGPGRNETVFR</sequence>
<organism>
    <name type="scientific">Chlorobium phaeovibrioides (strain DSM 265 / 1930)</name>
    <name type="common">Prosthecochloris vibrioformis (strain DSM 265)</name>
    <dbReference type="NCBI Taxonomy" id="290318"/>
    <lineage>
        <taxon>Bacteria</taxon>
        <taxon>Pseudomonadati</taxon>
        <taxon>Chlorobiota</taxon>
        <taxon>Chlorobiia</taxon>
        <taxon>Chlorobiales</taxon>
        <taxon>Chlorobiaceae</taxon>
        <taxon>Chlorobium/Pelodictyon group</taxon>
        <taxon>Chlorobium</taxon>
    </lineage>
</organism>
<comment type="function">
    <text evidence="1">Plays an important role in the de novo pathway of purine nucleotide biosynthesis. Catalyzes the first committed step in the biosynthesis of AMP from IMP.</text>
</comment>
<comment type="catalytic activity">
    <reaction evidence="1">
        <text>IMP + L-aspartate + GTP = N(6)-(1,2-dicarboxyethyl)-AMP + GDP + phosphate + 2 H(+)</text>
        <dbReference type="Rhea" id="RHEA:15753"/>
        <dbReference type="ChEBI" id="CHEBI:15378"/>
        <dbReference type="ChEBI" id="CHEBI:29991"/>
        <dbReference type="ChEBI" id="CHEBI:37565"/>
        <dbReference type="ChEBI" id="CHEBI:43474"/>
        <dbReference type="ChEBI" id="CHEBI:57567"/>
        <dbReference type="ChEBI" id="CHEBI:58053"/>
        <dbReference type="ChEBI" id="CHEBI:58189"/>
        <dbReference type="EC" id="6.3.4.4"/>
    </reaction>
</comment>
<comment type="cofactor">
    <cofactor evidence="1">
        <name>Mg(2+)</name>
        <dbReference type="ChEBI" id="CHEBI:18420"/>
    </cofactor>
    <text evidence="1">Binds 1 Mg(2+) ion per subunit.</text>
</comment>
<comment type="pathway">
    <text evidence="1">Purine metabolism; AMP biosynthesis via de novo pathway; AMP from IMP: step 1/2.</text>
</comment>
<comment type="subunit">
    <text evidence="1">Homodimer.</text>
</comment>
<comment type="subcellular location">
    <subcellularLocation>
        <location evidence="1">Cytoplasm</location>
    </subcellularLocation>
</comment>
<comment type="similarity">
    <text evidence="1">Belongs to the adenylosuccinate synthetase family.</text>
</comment>
<feature type="chain" id="PRO_1000073956" description="Adenylosuccinate synthetase">
    <location>
        <begin position="1"/>
        <end position="434"/>
    </location>
</feature>
<feature type="active site" description="Proton acceptor" evidence="1">
    <location>
        <position position="23"/>
    </location>
</feature>
<feature type="active site" description="Proton donor" evidence="1">
    <location>
        <position position="51"/>
    </location>
</feature>
<feature type="binding site" evidence="1">
    <location>
        <begin position="22"/>
        <end position="28"/>
    </location>
    <ligand>
        <name>GTP</name>
        <dbReference type="ChEBI" id="CHEBI:37565"/>
    </ligand>
</feature>
<feature type="binding site" description="in other chain" evidence="1">
    <location>
        <begin position="23"/>
        <end position="26"/>
    </location>
    <ligand>
        <name>IMP</name>
        <dbReference type="ChEBI" id="CHEBI:58053"/>
        <note>ligand shared between dimeric partners</note>
    </ligand>
</feature>
<feature type="binding site" evidence="1">
    <location>
        <position position="23"/>
    </location>
    <ligand>
        <name>Mg(2+)</name>
        <dbReference type="ChEBI" id="CHEBI:18420"/>
    </ligand>
</feature>
<feature type="binding site" description="in other chain" evidence="1">
    <location>
        <begin position="48"/>
        <end position="51"/>
    </location>
    <ligand>
        <name>IMP</name>
        <dbReference type="ChEBI" id="CHEBI:58053"/>
        <note>ligand shared between dimeric partners</note>
    </ligand>
</feature>
<feature type="binding site" evidence="1">
    <location>
        <begin position="50"/>
        <end position="52"/>
    </location>
    <ligand>
        <name>GTP</name>
        <dbReference type="ChEBI" id="CHEBI:37565"/>
    </ligand>
</feature>
<feature type="binding site" evidence="1">
    <location>
        <position position="50"/>
    </location>
    <ligand>
        <name>Mg(2+)</name>
        <dbReference type="ChEBI" id="CHEBI:18420"/>
    </ligand>
</feature>
<feature type="binding site" description="in other chain" evidence="1">
    <location>
        <position position="139"/>
    </location>
    <ligand>
        <name>IMP</name>
        <dbReference type="ChEBI" id="CHEBI:58053"/>
        <note>ligand shared between dimeric partners</note>
    </ligand>
</feature>
<feature type="binding site" evidence="1">
    <location>
        <position position="153"/>
    </location>
    <ligand>
        <name>IMP</name>
        <dbReference type="ChEBI" id="CHEBI:58053"/>
        <note>ligand shared between dimeric partners</note>
    </ligand>
</feature>
<feature type="binding site" description="in other chain" evidence="1">
    <location>
        <position position="234"/>
    </location>
    <ligand>
        <name>IMP</name>
        <dbReference type="ChEBI" id="CHEBI:58053"/>
        <note>ligand shared between dimeric partners</note>
    </ligand>
</feature>
<feature type="binding site" description="in other chain" evidence="1">
    <location>
        <position position="249"/>
    </location>
    <ligand>
        <name>IMP</name>
        <dbReference type="ChEBI" id="CHEBI:58053"/>
        <note>ligand shared between dimeric partners</note>
    </ligand>
</feature>
<feature type="binding site" evidence="1">
    <location>
        <begin position="309"/>
        <end position="315"/>
    </location>
    <ligand>
        <name>substrate</name>
    </ligand>
</feature>
<feature type="binding site" description="in other chain" evidence="1">
    <location>
        <position position="313"/>
    </location>
    <ligand>
        <name>IMP</name>
        <dbReference type="ChEBI" id="CHEBI:58053"/>
        <note>ligand shared between dimeric partners</note>
    </ligand>
</feature>
<feature type="binding site" evidence="1">
    <location>
        <position position="315"/>
    </location>
    <ligand>
        <name>GTP</name>
        <dbReference type="ChEBI" id="CHEBI:37565"/>
    </ligand>
</feature>
<feature type="binding site" evidence="1">
    <location>
        <begin position="341"/>
        <end position="343"/>
    </location>
    <ligand>
        <name>GTP</name>
        <dbReference type="ChEBI" id="CHEBI:37565"/>
    </ligand>
</feature>
<feature type="binding site" evidence="1">
    <location>
        <begin position="423"/>
        <end position="425"/>
    </location>
    <ligand>
        <name>GTP</name>
        <dbReference type="ChEBI" id="CHEBI:37565"/>
    </ligand>
</feature>
<keyword id="KW-0963">Cytoplasm</keyword>
<keyword id="KW-0342">GTP-binding</keyword>
<keyword id="KW-0436">Ligase</keyword>
<keyword id="KW-0460">Magnesium</keyword>
<keyword id="KW-0479">Metal-binding</keyword>
<keyword id="KW-0547">Nucleotide-binding</keyword>
<keyword id="KW-0658">Purine biosynthesis</keyword>
<name>PURA_CHLPM</name>
<gene>
    <name evidence="1" type="primary">purA</name>
    <name type="ordered locus">Cvib_0279</name>
</gene>
<dbReference type="EC" id="6.3.4.4" evidence="1"/>
<dbReference type="EMBL" id="CP000607">
    <property type="protein sequence ID" value="ABP36301.1"/>
    <property type="molecule type" value="Genomic_DNA"/>
</dbReference>
<dbReference type="SMR" id="A4SCU2"/>
<dbReference type="STRING" id="290318.Cvib_0279"/>
<dbReference type="KEGG" id="pvi:Cvib_0279"/>
<dbReference type="eggNOG" id="COG0104">
    <property type="taxonomic scope" value="Bacteria"/>
</dbReference>
<dbReference type="HOGENOM" id="CLU_029848_0_0_10"/>
<dbReference type="OrthoDB" id="9807553at2"/>
<dbReference type="UniPathway" id="UPA00075">
    <property type="reaction ID" value="UER00335"/>
</dbReference>
<dbReference type="GO" id="GO:0005737">
    <property type="term" value="C:cytoplasm"/>
    <property type="evidence" value="ECO:0007669"/>
    <property type="project" value="UniProtKB-SubCell"/>
</dbReference>
<dbReference type="GO" id="GO:0004019">
    <property type="term" value="F:adenylosuccinate synthase activity"/>
    <property type="evidence" value="ECO:0007669"/>
    <property type="project" value="UniProtKB-UniRule"/>
</dbReference>
<dbReference type="GO" id="GO:0005525">
    <property type="term" value="F:GTP binding"/>
    <property type="evidence" value="ECO:0007669"/>
    <property type="project" value="UniProtKB-UniRule"/>
</dbReference>
<dbReference type="GO" id="GO:0000287">
    <property type="term" value="F:magnesium ion binding"/>
    <property type="evidence" value="ECO:0007669"/>
    <property type="project" value="UniProtKB-UniRule"/>
</dbReference>
<dbReference type="GO" id="GO:0044208">
    <property type="term" value="P:'de novo' AMP biosynthetic process"/>
    <property type="evidence" value="ECO:0007669"/>
    <property type="project" value="UniProtKB-UniRule"/>
</dbReference>
<dbReference type="GO" id="GO:0046040">
    <property type="term" value="P:IMP metabolic process"/>
    <property type="evidence" value="ECO:0007669"/>
    <property type="project" value="TreeGrafter"/>
</dbReference>
<dbReference type="CDD" id="cd03108">
    <property type="entry name" value="AdSS"/>
    <property type="match status" value="1"/>
</dbReference>
<dbReference type="FunFam" id="1.10.300.10:FF:000001">
    <property type="entry name" value="Adenylosuccinate synthetase"/>
    <property type="match status" value="1"/>
</dbReference>
<dbReference type="FunFam" id="3.90.170.10:FF:000001">
    <property type="entry name" value="Adenylosuccinate synthetase"/>
    <property type="match status" value="1"/>
</dbReference>
<dbReference type="Gene3D" id="3.40.440.10">
    <property type="entry name" value="Adenylosuccinate Synthetase, subunit A, domain 1"/>
    <property type="match status" value="1"/>
</dbReference>
<dbReference type="Gene3D" id="1.10.300.10">
    <property type="entry name" value="Adenylosuccinate Synthetase, subunit A, domain 2"/>
    <property type="match status" value="1"/>
</dbReference>
<dbReference type="Gene3D" id="3.90.170.10">
    <property type="entry name" value="Adenylosuccinate Synthetase, subunit A, domain 3"/>
    <property type="match status" value="1"/>
</dbReference>
<dbReference type="HAMAP" id="MF_00011">
    <property type="entry name" value="Adenylosucc_synth"/>
    <property type="match status" value="1"/>
</dbReference>
<dbReference type="InterPro" id="IPR018220">
    <property type="entry name" value="Adenylosuccin_syn_GTP-bd"/>
</dbReference>
<dbReference type="InterPro" id="IPR033128">
    <property type="entry name" value="Adenylosuccin_syn_Lys_AS"/>
</dbReference>
<dbReference type="InterPro" id="IPR042109">
    <property type="entry name" value="Adenylosuccinate_synth_dom1"/>
</dbReference>
<dbReference type="InterPro" id="IPR042110">
    <property type="entry name" value="Adenylosuccinate_synth_dom2"/>
</dbReference>
<dbReference type="InterPro" id="IPR042111">
    <property type="entry name" value="Adenylosuccinate_synth_dom3"/>
</dbReference>
<dbReference type="InterPro" id="IPR001114">
    <property type="entry name" value="Adenylosuccinate_synthetase"/>
</dbReference>
<dbReference type="InterPro" id="IPR027417">
    <property type="entry name" value="P-loop_NTPase"/>
</dbReference>
<dbReference type="NCBIfam" id="NF002223">
    <property type="entry name" value="PRK01117.1"/>
    <property type="match status" value="1"/>
</dbReference>
<dbReference type="NCBIfam" id="TIGR00184">
    <property type="entry name" value="purA"/>
    <property type="match status" value="1"/>
</dbReference>
<dbReference type="PANTHER" id="PTHR11846">
    <property type="entry name" value="ADENYLOSUCCINATE SYNTHETASE"/>
    <property type="match status" value="1"/>
</dbReference>
<dbReference type="PANTHER" id="PTHR11846:SF0">
    <property type="entry name" value="ADENYLOSUCCINATE SYNTHETASE"/>
    <property type="match status" value="1"/>
</dbReference>
<dbReference type="Pfam" id="PF00709">
    <property type="entry name" value="Adenylsucc_synt"/>
    <property type="match status" value="1"/>
</dbReference>
<dbReference type="SMART" id="SM00788">
    <property type="entry name" value="Adenylsucc_synt"/>
    <property type="match status" value="1"/>
</dbReference>
<dbReference type="SUPFAM" id="SSF52540">
    <property type="entry name" value="P-loop containing nucleoside triphosphate hydrolases"/>
    <property type="match status" value="1"/>
</dbReference>
<dbReference type="PROSITE" id="PS01266">
    <property type="entry name" value="ADENYLOSUCCIN_SYN_1"/>
    <property type="match status" value="1"/>
</dbReference>
<dbReference type="PROSITE" id="PS00513">
    <property type="entry name" value="ADENYLOSUCCIN_SYN_2"/>
    <property type="match status" value="1"/>
</dbReference>
<proteinExistence type="inferred from homology"/>
<protein>
    <recommendedName>
        <fullName evidence="1">Adenylosuccinate synthetase</fullName>
        <shortName evidence="1">AMPSase</shortName>
        <shortName evidence="1">AdSS</shortName>
        <ecNumber evidence="1">6.3.4.4</ecNumber>
    </recommendedName>
    <alternativeName>
        <fullName evidence="1">IMP--aspartate ligase</fullName>
    </alternativeName>
</protein>
<evidence type="ECO:0000255" key="1">
    <source>
        <dbReference type="HAMAP-Rule" id="MF_00011"/>
    </source>
</evidence>